<sequence length="186" mass="20633">MKTAHEVRPGNVIMFEGSPWVVQKTETTRSGRNAAIVKLKLKNLLLNSGTETTFKGEDKIDDIILDRLDCTYSYFADPMYVFMDAEYNQYDVEAENLGDAAAYIVDGMEETCQVTFYEGKAISVEMPTTIVREVIYTEPSARGDTSGKVMKPATITGGGTISVADFVKVGDKIEIDTRTGEFKKRV</sequence>
<feature type="chain" id="PRO_1000010853" description="Elongation factor P">
    <location>
        <begin position="1"/>
        <end position="186"/>
    </location>
</feature>
<reference key="1">
    <citation type="submission" date="2006-08" db="EMBL/GenBank/DDBJ databases">
        <title>Complete sequence of chromosome 1 of Shewanella sp. MR-7.</title>
        <authorList>
            <person name="Copeland A."/>
            <person name="Lucas S."/>
            <person name="Lapidus A."/>
            <person name="Barry K."/>
            <person name="Detter J.C."/>
            <person name="Glavina del Rio T."/>
            <person name="Hammon N."/>
            <person name="Israni S."/>
            <person name="Dalin E."/>
            <person name="Tice H."/>
            <person name="Pitluck S."/>
            <person name="Kiss H."/>
            <person name="Brettin T."/>
            <person name="Bruce D."/>
            <person name="Han C."/>
            <person name="Tapia R."/>
            <person name="Gilna P."/>
            <person name="Schmutz J."/>
            <person name="Larimer F."/>
            <person name="Land M."/>
            <person name="Hauser L."/>
            <person name="Kyrpides N."/>
            <person name="Mikhailova N."/>
            <person name="Nealson K."/>
            <person name="Konstantinidis K."/>
            <person name="Klappenbach J."/>
            <person name="Tiedje J."/>
            <person name="Richardson P."/>
        </authorList>
    </citation>
    <scope>NUCLEOTIDE SEQUENCE [LARGE SCALE GENOMIC DNA]</scope>
    <source>
        <strain>MR-7</strain>
    </source>
</reference>
<accession>Q0HVC9</accession>
<proteinExistence type="inferred from homology"/>
<comment type="function">
    <text evidence="1">Involved in peptide bond synthesis. Stimulates efficient translation and peptide-bond synthesis on native or reconstituted 70S ribosomes in vitro. Probably functions indirectly by altering the affinity of the ribosome for aminoacyl-tRNA, thus increasing their reactivity as acceptors for peptidyl transferase.</text>
</comment>
<comment type="pathway">
    <text evidence="1">Protein biosynthesis; polypeptide chain elongation.</text>
</comment>
<comment type="subcellular location">
    <subcellularLocation>
        <location evidence="1">Cytoplasm</location>
    </subcellularLocation>
</comment>
<comment type="similarity">
    <text evidence="1">Belongs to the elongation factor P family.</text>
</comment>
<organism>
    <name type="scientific">Shewanella sp. (strain MR-7)</name>
    <dbReference type="NCBI Taxonomy" id="60481"/>
    <lineage>
        <taxon>Bacteria</taxon>
        <taxon>Pseudomonadati</taxon>
        <taxon>Pseudomonadota</taxon>
        <taxon>Gammaproteobacteria</taxon>
        <taxon>Alteromonadales</taxon>
        <taxon>Shewanellaceae</taxon>
        <taxon>Shewanella</taxon>
    </lineage>
</organism>
<protein>
    <recommendedName>
        <fullName evidence="1">Elongation factor P</fullName>
        <shortName evidence="1">EF-P</shortName>
    </recommendedName>
</protein>
<evidence type="ECO:0000255" key="1">
    <source>
        <dbReference type="HAMAP-Rule" id="MF_00141"/>
    </source>
</evidence>
<name>EFP_SHESR</name>
<dbReference type="EMBL" id="CP000444">
    <property type="protein sequence ID" value="ABI42926.1"/>
    <property type="molecule type" value="Genomic_DNA"/>
</dbReference>
<dbReference type="SMR" id="Q0HVC9"/>
<dbReference type="KEGG" id="shm:Shewmr7_1937"/>
<dbReference type="HOGENOM" id="CLU_074944_2_1_6"/>
<dbReference type="UniPathway" id="UPA00345"/>
<dbReference type="GO" id="GO:0005737">
    <property type="term" value="C:cytoplasm"/>
    <property type="evidence" value="ECO:0007669"/>
    <property type="project" value="UniProtKB-SubCell"/>
</dbReference>
<dbReference type="GO" id="GO:0003746">
    <property type="term" value="F:translation elongation factor activity"/>
    <property type="evidence" value="ECO:0007669"/>
    <property type="project" value="UniProtKB-UniRule"/>
</dbReference>
<dbReference type="GO" id="GO:0043043">
    <property type="term" value="P:peptide biosynthetic process"/>
    <property type="evidence" value="ECO:0007669"/>
    <property type="project" value="InterPro"/>
</dbReference>
<dbReference type="CDD" id="cd04470">
    <property type="entry name" value="S1_EF-P_repeat_1"/>
    <property type="match status" value="1"/>
</dbReference>
<dbReference type="CDD" id="cd05794">
    <property type="entry name" value="S1_EF-P_repeat_2"/>
    <property type="match status" value="1"/>
</dbReference>
<dbReference type="FunFam" id="2.30.30.30:FF:000003">
    <property type="entry name" value="Elongation factor P"/>
    <property type="match status" value="1"/>
</dbReference>
<dbReference type="FunFam" id="2.40.50.140:FF:000004">
    <property type="entry name" value="Elongation factor P"/>
    <property type="match status" value="1"/>
</dbReference>
<dbReference type="FunFam" id="2.40.50.140:FF:000009">
    <property type="entry name" value="Elongation factor P"/>
    <property type="match status" value="1"/>
</dbReference>
<dbReference type="Gene3D" id="2.30.30.30">
    <property type="match status" value="1"/>
</dbReference>
<dbReference type="Gene3D" id="2.40.50.140">
    <property type="entry name" value="Nucleic acid-binding proteins"/>
    <property type="match status" value="2"/>
</dbReference>
<dbReference type="HAMAP" id="MF_00141">
    <property type="entry name" value="EF_P"/>
    <property type="match status" value="1"/>
</dbReference>
<dbReference type="InterPro" id="IPR015365">
    <property type="entry name" value="Elong-fact-P_C"/>
</dbReference>
<dbReference type="InterPro" id="IPR012340">
    <property type="entry name" value="NA-bd_OB-fold"/>
</dbReference>
<dbReference type="InterPro" id="IPR014722">
    <property type="entry name" value="Rib_uL2_dom2"/>
</dbReference>
<dbReference type="InterPro" id="IPR020599">
    <property type="entry name" value="Transl_elong_fac_P/YeiP"/>
</dbReference>
<dbReference type="InterPro" id="IPR013185">
    <property type="entry name" value="Transl_elong_KOW-like"/>
</dbReference>
<dbReference type="InterPro" id="IPR001059">
    <property type="entry name" value="Transl_elong_P/YeiP_cen"/>
</dbReference>
<dbReference type="InterPro" id="IPR011768">
    <property type="entry name" value="Transl_elongation_fac_P"/>
</dbReference>
<dbReference type="InterPro" id="IPR008991">
    <property type="entry name" value="Translation_prot_SH3-like_sf"/>
</dbReference>
<dbReference type="NCBIfam" id="TIGR00038">
    <property type="entry name" value="efp"/>
    <property type="match status" value="1"/>
</dbReference>
<dbReference type="NCBIfam" id="NF001810">
    <property type="entry name" value="PRK00529.1"/>
    <property type="match status" value="1"/>
</dbReference>
<dbReference type="PANTHER" id="PTHR30053">
    <property type="entry name" value="ELONGATION FACTOR P"/>
    <property type="match status" value="1"/>
</dbReference>
<dbReference type="PANTHER" id="PTHR30053:SF12">
    <property type="entry name" value="ELONGATION FACTOR P (EF-P) FAMILY PROTEIN"/>
    <property type="match status" value="1"/>
</dbReference>
<dbReference type="Pfam" id="PF01132">
    <property type="entry name" value="EFP"/>
    <property type="match status" value="1"/>
</dbReference>
<dbReference type="Pfam" id="PF08207">
    <property type="entry name" value="EFP_N"/>
    <property type="match status" value="1"/>
</dbReference>
<dbReference type="Pfam" id="PF09285">
    <property type="entry name" value="Elong-fact-P_C"/>
    <property type="match status" value="1"/>
</dbReference>
<dbReference type="PIRSF" id="PIRSF005901">
    <property type="entry name" value="EF-P"/>
    <property type="match status" value="1"/>
</dbReference>
<dbReference type="SMART" id="SM01185">
    <property type="entry name" value="EFP"/>
    <property type="match status" value="1"/>
</dbReference>
<dbReference type="SMART" id="SM00841">
    <property type="entry name" value="Elong-fact-P_C"/>
    <property type="match status" value="1"/>
</dbReference>
<dbReference type="SUPFAM" id="SSF50249">
    <property type="entry name" value="Nucleic acid-binding proteins"/>
    <property type="match status" value="2"/>
</dbReference>
<dbReference type="SUPFAM" id="SSF50104">
    <property type="entry name" value="Translation proteins SH3-like domain"/>
    <property type="match status" value="1"/>
</dbReference>
<keyword id="KW-0963">Cytoplasm</keyword>
<keyword id="KW-0251">Elongation factor</keyword>
<keyword id="KW-0648">Protein biosynthesis</keyword>
<gene>
    <name evidence="1" type="primary">efp</name>
    <name type="ordered locus">Shewmr7_1937</name>
</gene>